<reference key="1">
    <citation type="journal article" date="2005" name="Science">
        <title>The transcriptional landscape of the mammalian genome.</title>
        <authorList>
            <person name="Carninci P."/>
            <person name="Kasukawa T."/>
            <person name="Katayama S."/>
            <person name="Gough J."/>
            <person name="Frith M.C."/>
            <person name="Maeda N."/>
            <person name="Oyama R."/>
            <person name="Ravasi T."/>
            <person name="Lenhard B."/>
            <person name="Wells C."/>
            <person name="Kodzius R."/>
            <person name="Shimokawa K."/>
            <person name="Bajic V.B."/>
            <person name="Brenner S.E."/>
            <person name="Batalov S."/>
            <person name="Forrest A.R."/>
            <person name="Zavolan M."/>
            <person name="Davis M.J."/>
            <person name="Wilming L.G."/>
            <person name="Aidinis V."/>
            <person name="Allen J.E."/>
            <person name="Ambesi-Impiombato A."/>
            <person name="Apweiler R."/>
            <person name="Aturaliya R.N."/>
            <person name="Bailey T.L."/>
            <person name="Bansal M."/>
            <person name="Baxter L."/>
            <person name="Beisel K.W."/>
            <person name="Bersano T."/>
            <person name="Bono H."/>
            <person name="Chalk A.M."/>
            <person name="Chiu K.P."/>
            <person name="Choudhary V."/>
            <person name="Christoffels A."/>
            <person name="Clutterbuck D.R."/>
            <person name="Crowe M.L."/>
            <person name="Dalla E."/>
            <person name="Dalrymple B.P."/>
            <person name="de Bono B."/>
            <person name="Della Gatta G."/>
            <person name="di Bernardo D."/>
            <person name="Down T."/>
            <person name="Engstrom P."/>
            <person name="Fagiolini M."/>
            <person name="Faulkner G."/>
            <person name="Fletcher C.F."/>
            <person name="Fukushima T."/>
            <person name="Furuno M."/>
            <person name="Futaki S."/>
            <person name="Gariboldi M."/>
            <person name="Georgii-Hemming P."/>
            <person name="Gingeras T.R."/>
            <person name="Gojobori T."/>
            <person name="Green R.E."/>
            <person name="Gustincich S."/>
            <person name="Harbers M."/>
            <person name="Hayashi Y."/>
            <person name="Hensch T.K."/>
            <person name="Hirokawa N."/>
            <person name="Hill D."/>
            <person name="Huminiecki L."/>
            <person name="Iacono M."/>
            <person name="Ikeo K."/>
            <person name="Iwama A."/>
            <person name="Ishikawa T."/>
            <person name="Jakt M."/>
            <person name="Kanapin A."/>
            <person name="Katoh M."/>
            <person name="Kawasawa Y."/>
            <person name="Kelso J."/>
            <person name="Kitamura H."/>
            <person name="Kitano H."/>
            <person name="Kollias G."/>
            <person name="Krishnan S.P."/>
            <person name="Kruger A."/>
            <person name="Kummerfeld S.K."/>
            <person name="Kurochkin I.V."/>
            <person name="Lareau L.F."/>
            <person name="Lazarevic D."/>
            <person name="Lipovich L."/>
            <person name="Liu J."/>
            <person name="Liuni S."/>
            <person name="McWilliam S."/>
            <person name="Madan Babu M."/>
            <person name="Madera M."/>
            <person name="Marchionni L."/>
            <person name="Matsuda H."/>
            <person name="Matsuzawa S."/>
            <person name="Miki H."/>
            <person name="Mignone F."/>
            <person name="Miyake S."/>
            <person name="Morris K."/>
            <person name="Mottagui-Tabar S."/>
            <person name="Mulder N."/>
            <person name="Nakano N."/>
            <person name="Nakauchi H."/>
            <person name="Ng P."/>
            <person name="Nilsson R."/>
            <person name="Nishiguchi S."/>
            <person name="Nishikawa S."/>
            <person name="Nori F."/>
            <person name="Ohara O."/>
            <person name="Okazaki Y."/>
            <person name="Orlando V."/>
            <person name="Pang K.C."/>
            <person name="Pavan W.J."/>
            <person name="Pavesi G."/>
            <person name="Pesole G."/>
            <person name="Petrovsky N."/>
            <person name="Piazza S."/>
            <person name="Reed J."/>
            <person name="Reid J.F."/>
            <person name="Ring B.Z."/>
            <person name="Ringwald M."/>
            <person name="Rost B."/>
            <person name="Ruan Y."/>
            <person name="Salzberg S.L."/>
            <person name="Sandelin A."/>
            <person name="Schneider C."/>
            <person name="Schoenbach C."/>
            <person name="Sekiguchi K."/>
            <person name="Semple C.A."/>
            <person name="Seno S."/>
            <person name="Sessa L."/>
            <person name="Sheng Y."/>
            <person name="Shibata Y."/>
            <person name="Shimada H."/>
            <person name="Shimada K."/>
            <person name="Silva D."/>
            <person name="Sinclair B."/>
            <person name="Sperling S."/>
            <person name="Stupka E."/>
            <person name="Sugiura K."/>
            <person name="Sultana R."/>
            <person name="Takenaka Y."/>
            <person name="Taki K."/>
            <person name="Tammoja K."/>
            <person name="Tan S.L."/>
            <person name="Tang S."/>
            <person name="Taylor M.S."/>
            <person name="Tegner J."/>
            <person name="Teichmann S.A."/>
            <person name="Ueda H.R."/>
            <person name="van Nimwegen E."/>
            <person name="Verardo R."/>
            <person name="Wei C.L."/>
            <person name="Yagi K."/>
            <person name="Yamanishi H."/>
            <person name="Zabarovsky E."/>
            <person name="Zhu S."/>
            <person name="Zimmer A."/>
            <person name="Hide W."/>
            <person name="Bult C."/>
            <person name="Grimmond S.M."/>
            <person name="Teasdale R.D."/>
            <person name="Liu E.T."/>
            <person name="Brusic V."/>
            <person name="Quackenbush J."/>
            <person name="Wahlestedt C."/>
            <person name="Mattick J.S."/>
            <person name="Hume D.A."/>
            <person name="Kai C."/>
            <person name="Sasaki D."/>
            <person name="Tomaru Y."/>
            <person name="Fukuda S."/>
            <person name="Kanamori-Katayama M."/>
            <person name="Suzuki M."/>
            <person name="Aoki J."/>
            <person name="Arakawa T."/>
            <person name="Iida J."/>
            <person name="Imamura K."/>
            <person name="Itoh M."/>
            <person name="Kato T."/>
            <person name="Kawaji H."/>
            <person name="Kawagashira N."/>
            <person name="Kawashima T."/>
            <person name="Kojima M."/>
            <person name="Kondo S."/>
            <person name="Konno H."/>
            <person name="Nakano K."/>
            <person name="Ninomiya N."/>
            <person name="Nishio T."/>
            <person name="Okada M."/>
            <person name="Plessy C."/>
            <person name="Shibata K."/>
            <person name="Shiraki T."/>
            <person name="Suzuki S."/>
            <person name="Tagami M."/>
            <person name="Waki K."/>
            <person name="Watahiki A."/>
            <person name="Okamura-Oho Y."/>
            <person name="Suzuki H."/>
            <person name="Kawai J."/>
            <person name="Hayashizaki Y."/>
        </authorList>
    </citation>
    <scope>NUCLEOTIDE SEQUENCE [LARGE SCALE MRNA]</scope>
    <source>
        <strain>C57BL/6J</strain>
        <tissue>Epididymis</tissue>
        <tissue>Ovary</tissue>
        <tissue>Uterus</tissue>
    </source>
</reference>
<reference key="2">
    <citation type="journal article" date="2004" name="Genome Res.">
        <title>The status, quality, and expansion of the NIH full-length cDNA project: the Mammalian Gene Collection (MGC).</title>
        <authorList>
            <consortium name="The MGC Project Team"/>
        </authorList>
    </citation>
    <scope>NUCLEOTIDE SEQUENCE [LARGE SCALE MRNA]</scope>
    <source>
        <strain>FVB/N</strain>
        <tissue>Mammary tumor</tissue>
    </source>
</reference>
<reference key="3">
    <citation type="journal article" date="2010" name="Cell">
        <title>A tissue-specific atlas of mouse protein phosphorylation and expression.</title>
        <authorList>
            <person name="Huttlin E.L."/>
            <person name="Jedrychowski M.P."/>
            <person name="Elias J.E."/>
            <person name="Goswami T."/>
            <person name="Rad R."/>
            <person name="Beausoleil S.A."/>
            <person name="Villen J."/>
            <person name="Haas W."/>
            <person name="Sowa M.E."/>
            <person name="Gygi S.P."/>
        </authorList>
    </citation>
    <scope>IDENTIFICATION BY MASS SPECTROMETRY [LARGE SCALE ANALYSIS]</scope>
    <source>
        <tissue>Pancreas</tissue>
    </source>
</reference>
<sequence>MQLSNRAAAREAASRDVLAADLRCSLFASALQSYKRDSVLRPFPASYARHDCKDFEALLADTGRLPNLKELLQSSRDTDKQAWDLVSWILSSKILTIHSAKKAEFEKIQQLTGAPHTPVPTPDFLFEIEYFDPANSRFYETKGERDLIYAFHGSRLENFHSIIHNGLHCHLNKTSLFGEGTYLTSDLSLALIYSPHGHGWQHSLLGPILSCVAVCEVIDHPDVKCQIKKKDSKEIDRSRARIKHSEGGEIPPKYFVVTNNQLLRVKYLLVYSQKQPKRASSQLSWLSSHWFVIMMSLYLLLLLIVSVTNSSVFHHFWNRVKR</sequence>
<organism>
    <name type="scientific">Mus musculus</name>
    <name type="common">Mouse</name>
    <dbReference type="NCBI Taxonomy" id="10090"/>
    <lineage>
        <taxon>Eukaryota</taxon>
        <taxon>Metazoa</taxon>
        <taxon>Chordata</taxon>
        <taxon>Craniata</taxon>
        <taxon>Vertebrata</taxon>
        <taxon>Euteleostomi</taxon>
        <taxon>Mammalia</taxon>
        <taxon>Eutheria</taxon>
        <taxon>Euarchontoglires</taxon>
        <taxon>Glires</taxon>
        <taxon>Rodentia</taxon>
        <taxon>Myomorpha</taxon>
        <taxon>Muroidea</taxon>
        <taxon>Muridae</taxon>
        <taxon>Murinae</taxon>
        <taxon>Mus</taxon>
        <taxon>Mus</taxon>
    </lineage>
</organism>
<comment type="function">
    <text evidence="1">Intracellular mono-ADP-ribosyltransferase that plays a role in different processes, such as protein translation and unfolded protein response (UPR), through the mono-ADP-ribosylation of proteins involved in those processes. Acts as an inhibitor of protein translation by catalyzing mono-ADP-ribosylation of ribosomal subunits, such as RPL14 and RPS6, thereby inhibiting polysome assembly and mRNA loading. Mono-ADP-ribosylation of ribosomal subunits is promoted by NMNAT2. Involved in the unfolded protein response (UPR) by ADP-ribosylating and activating EIF2AK3 and ERN1, two important UPR effectors. May also mediate mono-ADP-ribosylation of karyopherin KPNB1 a nuclear import factor. May not modify proteins on arginine or cysteine residues compared to other mono-ADP-ribosyltransferases.</text>
</comment>
<comment type="catalytic activity">
    <reaction evidence="1">
        <text>L-aspartyl-[protein] + NAD(+) = 4-O-(ADP-D-ribosyl)-L-aspartyl-[protein] + nicotinamide</text>
        <dbReference type="Rhea" id="RHEA:54424"/>
        <dbReference type="Rhea" id="RHEA-COMP:9867"/>
        <dbReference type="Rhea" id="RHEA-COMP:13832"/>
        <dbReference type="ChEBI" id="CHEBI:17154"/>
        <dbReference type="ChEBI" id="CHEBI:29961"/>
        <dbReference type="ChEBI" id="CHEBI:57540"/>
        <dbReference type="ChEBI" id="CHEBI:138102"/>
    </reaction>
</comment>
<comment type="catalytic activity">
    <reaction evidence="1">
        <text>L-lysyl-[protein] + NAD(+) = N(6)-(ADP-D-ribosyl)-L-lysyl-[protein] + nicotinamide + H(+)</text>
        <dbReference type="Rhea" id="RHEA:58220"/>
        <dbReference type="Rhea" id="RHEA-COMP:9752"/>
        <dbReference type="Rhea" id="RHEA-COMP:15088"/>
        <dbReference type="ChEBI" id="CHEBI:15378"/>
        <dbReference type="ChEBI" id="CHEBI:17154"/>
        <dbReference type="ChEBI" id="CHEBI:29969"/>
        <dbReference type="ChEBI" id="CHEBI:57540"/>
        <dbReference type="ChEBI" id="CHEBI:142515"/>
    </reaction>
</comment>
<comment type="catalytic activity">
    <reaction evidence="1">
        <text>L-glutamyl-[protein] + NAD(+) = 5-O-(ADP-D-ribosyl)-L-glutamyl-[protein] + nicotinamide</text>
        <dbReference type="Rhea" id="RHEA:58224"/>
        <dbReference type="Rhea" id="RHEA-COMP:10208"/>
        <dbReference type="Rhea" id="RHEA-COMP:15089"/>
        <dbReference type="ChEBI" id="CHEBI:17154"/>
        <dbReference type="ChEBI" id="CHEBI:29973"/>
        <dbReference type="ChEBI" id="CHEBI:57540"/>
        <dbReference type="ChEBI" id="CHEBI:142540"/>
    </reaction>
</comment>
<comment type="activity regulation">
    <text evidence="2">In absence of activation signal, PARP16 is autoinhibited by the PARP alpha-helical domain (also named HD region), which prevents effective NAD(+)-binding. Activity is highly stimulated by signals, which unfold the PARP alpha-helical domain, relieving autoinhibition.</text>
</comment>
<comment type="subunit">
    <text evidence="1">Interacts with KPNB1.</text>
</comment>
<comment type="subcellular location">
    <subcellularLocation>
        <location evidence="1">Endoplasmic reticulum membrane</location>
        <topology evidence="1">Single-pass type IV membrane protein</topology>
    </subcellularLocation>
</comment>
<comment type="domain">
    <text evidence="1">The PARP alpha-helical domain (also named HD region) is regulatory, it packs against the catalytic domain.</text>
</comment>
<comment type="PTM">
    <text evidence="1">Auto-mono-ADP-ribosylated.</text>
</comment>
<comment type="similarity">
    <text evidence="5">Belongs to the ARTD/PARP family.</text>
</comment>
<protein>
    <recommendedName>
        <fullName evidence="5">Protein mono-ADP-ribosyltransferase PARP16</fullName>
        <ecNumber evidence="1">2.4.2.-</ecNumber>
    </recommendedName>
    <alternativeName>
        <fullName evidence="1">ADP-ribosyltransferase diphtheria toxin-like 15</fullName>
    </alternativeName>
    <alternativeName>
        <fullName evidence="1">Poly [ADP-ribose] polymerase 16</fullName>
        <shortName evidence="1">PARP-16</shortName>
    </alternativeName>
</protein>
<feature type="chain" id="PRO_0000252438" description="Protein mono-ADP-ribosyltransferase PARP16">
    <location>
        <begin position="1"/>
        <end position="322"/>
    </location>
</feature>
<feature type="topological domain" description="Cytoplasmic" evidence="3">
    <location>
        <begin position="1"/>
        <end position="287"/>
    </location>
</feature>
<feature type="transmembrane region" description="Helical" evidence="3">
    <location>
        <begin position="288"/>
        <end position="308"/>
    </location>
</feature>
<feature type="topological domain" description="Lumenal" evidence="3">
    <location>
        <begin position="309"/>
        <end position="322"/>
    </location>
</feature>
<feature type="domain" description="PARP alpha-helical">
    <location>
        <begin position="5"/>
        <end position="91"/>
    </location>
</feature>
<feature type="domain" description="PARP catalytic" evidence="4">
    <location>
        <begin position="94"/>
        <end position="279"/>
    </location>
</feature>
<feature type="binding site" evidence="1">
    <location>
        <position position="152"/>
    </location>
    <ligand>
        <name>NAD(+)</name>
        <dbReference type="ChEBI" id="CHEBI:57540"/>
    </ligand>
</feature>
<feature type="binding site" evidence="1">
    <location>
        <position position="182"/>
    </location>
    <ligand>
        <name>NAD(+)</name>
        <dbReference type="ChEBI" id="CHEBI:57540"/>
    </ligand>
</feature>
<feature type="binding site" evidence="1">
    <location>
        <position position="254"/>
    </location>
    <ligand>
        <name>NAD(+)</name>
        <dbReference type="ChEBI" id="CHEBI:57540"/>
    </ligand>
</feature>
<feature type="site" description="Nicotinamide-stacking aromate" evidence="1">
    <location>
        <position position="193"/>
    </location>
</feature>
<feature type="sequence conflict" description="In Ref. 1; BAC28475." evidence="5" ref="1">
    <original>S</original>
    <variation>N</variation>
    <location>
        <position position="25"/>
    </location>
</feature>
<feature type="sequence conflict" description="In Ref. 1; BAC28475." evidence="5" ref="1">
    <original>H</original>
    <variation>Q</variation>
    <location>
        <position position="168"/>
    </location>
</feature>
<feature type="sequence conflict" description="In Ref. 2; AAH55447." evidence="5" ref="2">
    <original>V</original>
    <variation>A</variation>
    <location>
        <position position="312"/>
    </location>
</feature>
<keyword id="KW-0013">ADP-ribosylation</keyword>
<keyword id="KW-0256">Endoplasmic reticulum</keyword>
<keyword id="KW-0328">Glycosyltransferase</keyword>
<keyword id="KW-0472">Membrane</keyword>
<keyword id="KW-0520">NAD</keyword>
<keyword id="KW-0548">Nucleotidyltransferase</keyword>
<keyword id="KW-1185">Reference proteome</keyword>
<keyword id="KW-0808">Transferase</keyword>
<keyword id="KW-0812">Transmembrane</keyword>
<keyword id="KW-1133">Transmembrane helix</keyword>
<keyword id="KW-0834">Unfolded protein response</keyword>
<gene>
    <name evidence="6" type="primary">Parp16</name>
    <name evidence="1" type="synonym">Artd15</name>
</gene>
<accession>Q7TMM8</accession>
<accession>Q3V031</accession>
<accession>Q8CC71</accession>
<dbReference type="EC" id="2.4.2.-" evidence="1"/>
<dbReference type="EMBL" id="AK033791">
    <property type="protein sequence ID" value="BAC28475.1"/>
    <property type="molecule type" value="mRNA"/>
</dbReference>
<dbReference type="EMBL" id="AK133475">
    <property type="protein sequence ID" value="BAE21674.1"/>
    <property type="molecule type" value="mRNA"/>
</dbReference>
<dbReference type="EMBL" id="BC055447">
    <property type="protein sequence ID" value="AAH55447.1"/>
    <property type="molecule type" value="mRNA"/>
</dbReference>
<dbReference type="CCDS" id="CCDS23286.1"/>
<dbReference type="RefSeq" id="NP_803411.3">
    <property type="nucleotide sequence ID" value="NM_177460.4"/>
</dbReference>
<dbReference type="SMR" id="Q7TMM8"/>
<dbReference type="BioGRID" id="229525">
    <property type="interactions" value="1"/>
</dbReference>
<dbReference type="FunCoup" id="Q7TMM8">
    <property type="interactions" value="1165"/>
</dbReference>
<dbReference type="IntAct" id="Q7TMM8">
    <property type="interactions" value="1"/>
</dbReference>
<dbReference type="STRING" id="10090.ENSMUSP00000150318"/>
<dbReference type="GlyGen" id="Q7TMM8">
    <property type="glycosylation" value="1 site"/>
</dbReference>
<dbReference type="PhosphoSitePlus" id="Q7TMM8"/>
<dbReference type="PaxDb" id="10090-ENSMUSP00000070098"/>
<dbReference type="ProteomicsDB" id="294386"/>
<dbReference type="Pumba" id="Q7TMM8"/>
<dbReference type="Antibodypedia" id="25928">
    <property type="antibodies" value="167 antibodies from 24 providers"/>
</dbReference>
<dbReference type="DNASU" id="214424"/>
<dbReference type="Ensembl" id="ENSMUST00000069000.9">
    <property type="protein sequence ID" value="ENSMUSP00000070098.8"/>
    <property type="gene ID" value="ENSMUSG00000032392.12"/>
</dbReference>
<dbReference type="Ensembl" id="ENSMUST00000213396.2">
    <property type="protein sequence ID" value="ENSMUSP00000150318.2"/>
    <property type="gene ID" value="ENSMUSG00000032392.12"/>
</dbReference>
<dbReference type="Ensembl" id="ENSMUST00000216702.2">
    <property type="protein sequence ID" value="ENSMUSP00000149927.2"/>
    <property type="gene ID" value="ENSMUSG00000032392.12"/>
</dbReference>
<dbReference type="GeneID" id="214424"/>
<dbReference type="KEGG" id="mmu:214424"/>
<dbReference type="UCSC" id="uc009qcx.2">
    <property type="organism name" value="mouse"/>
</dbReference>
<dbReference type="AGR" id="MGI:2446133"/>
<dbReference type="CTD" id="54956"/>
<dbReference type="MGI" id="MGI:2446133">
    <property type="gene designation" value="Parp16"/>
</dbReference>
<dbReference type="VEuPathDB" id="HostDB:ENSMUSG00000032392"/>
<dbReference type="eggNOG" id="ENOG502QPKE">
    <property type="taxonomic scope" value="Eukaryota"/>
</dbReference>
<dbReference type="GeneTree" id="ENSGT00950000183129"/>
<dbReference type="HOGENOM" id="CLU_053263_1_0_1"/>
<dbReference type="InParanoid" id="Q7TMM8"/>
<dbReference type="OMA" id="LLYGQSC"/>
<dbReference type="OrthoDB" id="19501at2759"/>
<dbReference type="PhylomeDB" id="Q7TMM8"/>
<dbReference type="TreeFam" id="TF323413"/>
<dbReference type="Reactome" id="R-MMU-197264">
    <property type="pathway name" value="Nicotinamide salvaging"/>
</dbReference>
<dbReference type="BioGRID-ORCS" id="214424">
    <property type="hits" value="3 hits in 76 CRISPR screens"/>
</dbReference>
<dbReference type="ChiTaRS" id="Parp16">
    <property type="organism name" value="mouse"/>
</dbReference>
<dbReference type="PRO" id="PR:Q7TMM8"/>
<dbReference type="Proteomes" id="UP000000589">
    <property type="component" value="Chromosome 9"/>
</dbReference>
<dbReference type="RNAct" id="Q7TMM8">
    <property type="molecule type" value="protein"/>
</dbReference>
<dbReference type="Bgee" id="ENSMUSG00000032392">
    <property type="expression patterns" value="Expressed in saccule of membranous labyrinth and 196 other cell types or tissues"/>
</dbReference>
<dbReference type="ExpressionAtlas" id="Q7TMM8">
    <property type="expression patterns" value="baseline and differential"/>
</dbReference>
<dbReference type="GO" id="GO:0005789">
    <property type="term" value="C:endoplasmic reticulum membrane"/>
    <property type="evidence" value="ECO:0007669"/>
    <property type="project" value="UniProtKB-SubCell"/>
</dbReference>
<dbReference type="GO" id="GO:0071782">
    <property type="term" value="C:endoplasmic reticulum tubular network"/>
    <property type="evidence" value="ECO:0007669"/>
    <property type="project" value="Ensembl"/>
</dbReference>
<dbReference type="GO" id="GO:0005635">
    <property type="term" value="C:nuclear envelope"/>
    <property type="evidence" value="ECO:0007669"/>
    <property type="project" value="Ensembl"/>
</dbReference>
<dbReference type="GO" id="GO:0019900">
    <property type="term" value="F:kinase binding"/>
    <property type="evidence" value="ECO:0007669"/>
    <property type="project" value="Ensembl"/>
</dbReference>
<dbReference type="GO" id="GO:0003950">
    <property type="term" value="F:NAD+ poly-ADP-ribosyltransferase activity"/>
    <property type="evidence" value="ECO:0007669"/>
    <property type="project" value="Ensembl"/>
</dbReference>
<dbReference type="GO" id="GO:1990404">
    <property type="term" value="F:NAD+-protein mono-ADP-ribosyltransferase activity"/>
    <property type="evidence" value="ECO:0000250"/>
    <property type="project" value="UniProtKB"/>
</dbReference>
<dbReference type="GO" id="GO:0140806">
    <property type="term" value="F:NAD+-protein-aspartate ADP-ribosyltransferase activity"/>
    <property type="evidence" value="ECO:0000250"/>
    <property type="project" value="UniProtKB"/>
</dbReference>
<dbReference type="GO" id="GO:0140807">
    <property type="term" value="F:NAD+-protein-glutamate ADP-ribosyltransferase activity"/>
    <property type="evidence" value="ECO:0000250"/>
    <property type="project" value="UniProtKB"/>
</dbReference>
<dbReference type="GO" id="GO:0140804">
    <property type="term" value="F:NAD+-protein-lysine ADP-ribosyltransferase activity"/>
    <property type="evidence" value="ECO:0000250"/>
    <property type="project" value="UniProtKB"/>
</dbReference>
<dbReference type="GO" id="GO:0016779">
    <property type="term" value="F:nucleotidyltransferase activity"/>
    <property type="evidence" value="ECO:0007669"/>
    <property type="project" value="UniProtKB-KW"/>
</dbReference>
<dbReference type="GO" id="GO:0043539">
    <property type="term" value="F:protein serine/threonine kinase activator activity"/>
    <property type="evidence" value="ECO:0007669"/>
    <property type="project" value="Ensembl"/>
</dbReference>
<dbReference type="GO" id="GO:1990830">
    <property type="term" value="P:cellular response to leukemia inhibitory factor"/>
    <property type="evidence" value="ECO:0000270"/>
    <property type="project" value="MGI"/>
</dbReference>
<dbReference type="GO" id="GO:0036498">
    <property type="term" value="P:IRE1-mediated unfolded protein response"/>
    <property type="evidence" value="ECO:0007669"/>
    <property type="project" value="Ensembl"/>
</dbReference>
<dbReference type="GO" id="GO:2000766">
    <property type="term" value="P:negative regulation of cytoplasmic translation"/>
    <property type="evidence" value="ECO:0007669"/>
    <property type="project" value="Ensembl"/>
</dbReference>
<dbReference type="GO" id="GO:0070213">
    <property type="term" value="P:protein auto-ADP-ribosylation"/>
    <property type="evidence" value="ECO:0000250"/>
    <property type="project" value="UniProtKB"/>
</dbReference>
<dbReference type="FunFam" id="3.90.228.10:FF:000005">
    <property type="entry name" value="Poly [ADP-ribose] polymerase"/>
    <property type="match status" value="1"/>
</dbReference>
<dbReference type="Gene3D" id="3.90.228.10">
    <property type="match status" value="1"/>
</dbReference>
<dbReference type="InterPro" id="IPR051838">
    <property type="entry name" value="ARTD_PARP"/>
</dbReference>
<dbReference type="InterPro" id="IPR041400">
    <property type="entry name" value="PARP16_N"/>
</dbReference>
<dbReference type="InterPro" id="IPR012317">
    <property type="entry name" value="Poly(ADP-ribose)pol_cat_dom"/>
</dbReference>
<dbReference type="PANTHER" id="PTHR21328">
    <property type="entry name" value="POLY ADP-RIBOSE POLYMERASE FAMILY, MEMBER PARP"/>
    <property type="match status" value="1"/>
</dbReference>
<dbReference type="Pfam" id="PF18084">
    <property type="entry name" value="ARTD15_N"/>
    <property type="match status" value="1"/>
</dbReference>
<dbReference type="Pfam" id="PF00644">
    <property type="entry name" value="PARP"/>
    <property type="match status" value="1"/>
</dbReference>
<dbReference type="SUPFAM" id="SSF56399">
    <property type="entry name" value="ADP-ribosylation"/>
    <property type="match status" value="1"/>
</dbReference>
<dbReference type="PROSITE" id="PS51059">
    <property type="entry name" value="PARP_CATALYTIC"/>
    <property type="match status" value="1"/>
</dbReference>
<proteinExistence type="evidence at protein level"/>
<evidence type="ECO:0000250" key="1">
    <source>
        <dbReference type="UniProtKB" id="Q8N5Y8"/>
    </source>
</evidence>
<evidence type="ECO:0000250" key="2">
    <source>
        <dbReference type="UniProtKB" id="Q9UGN5"/>
    </source>
</evidence>
<evidence type="ECO:0000255" key="3"/>
<evidence type="ECO:0000255" key="4">
    <source>
        <dbReference type="PROSITE-ProRule" id="PRU00397"/>
    </source>
</evidence>
<evidence type="ECO:0000305" key="5"/>
<evidence type="ECO:0000312" key="6">
    <source>
        <dbReference type="MGI" id="MGI:2446133"/>
    </source>
</evidence>
<name>PAR16_MOUSE</name>